<evidence type="ECO:0000255" key="1"/>
<evidence type="ECO:0000256" key="2">
    <source>
        <dbReference type="SAM" id="MobiDB-lite"/>
    </source>
</evidence>
<evidence type="ECO:0000269" key="3">
    <source>
    </source>
</evidence>
<evidence type="ECO:0000269" key="4">
    <source>
    </source>
</evidence>
<evidence type="ECO:0000269" key="5">
    <source>
    </source>
</evidence>
<evidence type="ECO:0000269" key="6">
    <source>
    </source>
</evidence>
<evidence type="ECO:0000269" key="7">
    <source>
    </source>
</evidence>
<evidence type="ECO:0000303" key="8">
    <source>
    </source>
</evidence>
<evidence type="ECO:0000303" key="9">
    <source>
    </source>
</evidence>
<evidence type="ECO:0000305" key="10"/>
<evidence type="ECO:0000312" key="11">
    <source>
        <dbReference type="EMBL" id="AAM18109.1"/>
    </source>
</evidence>
<evidence type="ECO:0000312" key="12">
    <source>
        <dbReference type="EMBL" id="CAA91995.2"/>
    </source>
</evidence>
<evidence type="ECO:0000312" key="13">
    <source>
        <dbReference type="WormBase" id="K09C8.1"/>
    </source>
</evidence>
<proteinExistence type="evidence at protein level"/>
<reference evidence="10 11" key="1">
    <citation type="journal article" date="2002" name="J. Biol. Chem.">
        <title>The NHX family of Na+-H+ exchangers in Caenorhabditis elegans.</title>
        <authorList>
            <person name="Nehrke K."/>
            <person name="Melvin J.E."/>
        </authorList>
    </citation>
    <scope>NUCLEOTIDE SEQUENCE [MRNA]</scope>
    <scope>SUBCELLULAR LOCATION</scope>
    <scope>TISSUE SPECIFICITY</scope>
</reference>
<reference evidence="12" key="2">
    <citation type="journal article" date="1998" name="Science">
        <title>Genome sequence of the nematode C. elegans: a platform for investigating biology.</title>
        <authorList>
            <consortium name="The C. elegans sequencing consortium"/>
        </authorList>
    </citation>
    <scope>NUCLEOTIDE SEQUENCE [LARGE SCALE GENOMIC DNA]</scope>
    <source>
        <strain evidence="12">Bristol N2</strain>
    </source>
</reference>
<reference evidence="10" key="3">
    <citation type="journal article" date="2008" name="Cell">
        <title>Protons act as a transmitter for muscle contraction in C. elegans.</title>
        <authorList>
            <person name="Beg A.A."/>
            <person name="Ernstrom G.G."/>
            <person name="Nix P."/>
            <person name="Davis M.W."/>
            <person name="Jorgensen E.M."/>
        </authorList>
    </citation>
    <scope>FUNCTION</scope>
    <scope>SUBCELLULAR LOCATION</scope>
    <scope>TISSUE SPECIFICITY</scope>
    <scope>DISRUPTION PHENOTYPE</scope>
    <scope>MUTAGENESIS OF GLY-318</scope>
</reference>
<reference evidence="10" key="4">
    <citation type="journal article" date="2008" name="Curr. Biol.">
        <title>Oscillatory transepithelial H(+) flux regulates a rhythmic behavior in C. elegans.</title>
        <authorList>
            <person name="Pfeiffer J."/>
            <person name="Johnson D."/>
            <person name="Nehrke K."/>
        </authorList>
    </citation>
    <scope>FUNCTION</scope>
    <scope>DISRUPTION PHENOTYPE</scope>
</reference>
<reference evidence="10" key="5">
    <citation type="journal article" date="2013" name="J. Biol. Chem.">
        <title>Analysis of Ca2+ signaling motifs that regulate proton signaling through the Na+/H+ exchanger NHX-7 during a rhythmic behavior in Caenorhabditis elegans.</title>
        <authorList>
            <person name="Allman E."/>
            <person name="Waters K."/>
            <person name="Ackroyd S."/>
            <person name="Nehrke K."/>
        </authorList>
    </citation>
    <scope>FUNCTION</scope>
    <scope>INTERACTION WITH CMD-1</scope>
    <scope>SUBCELLULAR LOCATION</scope>
    <scope>DISRUPTION PHENOTYPE</scope>
    <scope>MUTAGENESIS OF GLU-271; 541-MET--LEU-545; 569-LYS-LYS-570 AND THR-618</scope>
</reference>
<reference key="6">
    <citation type="journal article" date="2015" name="PLoS ONE">
        <title>Aberrant fat metabolism in Caenorhabditis elegans mutants with defects in the defecation motor program.</title>
        <authorList>
            <person name="Sheng M."/>
            <person name="Hosseinzadeh A."/>
            <person name="Muralidharan S.V."/>
            <person name="Gaur R."/>
            <person name="Selstam E."/>
            <person name="Tuck S."/>
        </authorList>
    </citation>
    <scope>FUNCTION</scope>
</reference>
<feature type="chain" id="PRO_0000424354" description="Na(+)/H(+) exchanger protein 7">
    <location>
        <begin position="1"/>
        <end position="783"/>
    </location>
</feature>
<feature type="transmembrane region" description="Helical" evidence="1">
    <location>
        <begin position="1"/>
        <end position="18"/>
    </location>
</feature>
<feature type="topological domain" description="Extracellular" evidence="1">
    <location>
        <begin position="19"/>
        <end position="108"/>
    </location>
</feature>
<feature type="transmembrane region" description="Helical" evidence="1">
    <location>
        <begin position="109"/>
        <end position="129"/>
    </location>
</feature>
<feature type="topological domain" description="Cytoplasmic" evidence="1">
    <location>
        <begin position="130"/>
        <end position="132"/>
    </location>
</feature>
<feature type="transmembrane region" description="Helical" evidence="1">
    <location>
        <begin position="133"/>
        <end position="153"/>
    </location>
</feature>
<feature type="topological domain" description="Extracellular" evidence="1">
    <location>
        <begin position="154"/>
        <end position="159"/>
    </location>
</feature>
<feature type="transmembrane region" description="Helical" evidence="1">
    <location>
        <begin position="160"/>
        <end position="180"/>
    </location>
</feature>
<feature type="topological domain" description="Cytoplasmic" evidence="1">
    <location>
        <begin position="181"/>
        <end position="206"/>
    </location>
</feature>
<feature type="transmembrane region" description="Helical" evidence="1">
    <location>
        <begin position="207"/>
        <end position="227"/>
    </location>
</feature>
<feature type="topological domain" description="Extracellular" evidence="1">
    <location>
        <begin position="228"/>
        <end position="235"/>
    </location>
</feature>
<feature type="transmembrane region" description="Helical" evidence="1">
    <location>
        <begin position="236"/>
        <end position="256"/>
    </location>
</feature>
<feature type="topological domain" description="Cytoplasmic" evidence="1">
    <location>
        <begin position="257"/>
        <end position="262"/>
    </location>
</feature>
<feature type="transmembrane region" description="Helical" evidence="1">
    <location>
        <begin position="263"/>
        <end position="283"/>
    </location>
</feature>
<feature type="topological domain" description="Extracellular" evidence="1">
    <location>
        <begin position="284"/>
        <end position="299"/>
    </location>
</feature>
<feature type="transmembrane region" description="Helical" evidence="1">
    <location>
        <begin position="300"/>
        <end position="320"/>
    </location>
</feature>
<feature type="topological domain" description="Cytoplasmic" evidence="1">
    <location>
        <begin position="321"/>
        <end position="350"/>
    </location>
</feature>
<feature type="transmembrane region" description="Helical" evidence="1">
    <location>
        <begin position="351"/>
        <end position="371"/>
    </location>
</feature>
<feature type="topological domain" description="Extracellular" evidence="1">
    <location>
        <begin position="372"/>
        <end position="390"/>
    </location>
</feature>
<feature type="intramembrane region" description="Helical" evidence="1">
    <location>
        <begin position="391"/>
        <end position="411"/>
    </location>
</feature>
<feature type="topological domain" description="Extracellular" evidence="1">
    <location>
        <begin position="412"/>
        <end position="424"/>
    </location>
</feature>
<feature type="transmembrane region" description="Helical" evidence="1">
    <location>
        <begin position="425"/>
        <end position="445"/>
    </location>
</feature>
<feature type="topological domain" description="Cytoplasmic" evidence="1">
    <location>
        <begin position="446"/>
        <end position="464"/>
    </location>
</feature>
<feature type="transmembrane region" description="Helical" evidence="1">
    <location>
        <begin position="465"/>
        <end position="485"/>
    </location>
</feature>
<feature type="topological domain" description="Extracellular" evidence="1">
    <location>
        <begin position="486"/>
        <end position="492"/>
    </location>
</feature>
<feature type="transmembrane region" description="Helical" evidence="1">
    <location>
        <begin position="493"/>
        <end position="513"/>
    </location>
</feature>
<feature type="topological domain" description="Cytoplasmic" evidence="1">
    <location>
        <begin position="514"/>
        <end position="783"/>
    </location>
</feature>
<feature type="region of interest" description="Disordered" evidence="2">
    <location>
        <begin position="745"/>
        <end position="783"/>
    </location>
</feature>
<feature type="coiled-coil region" evidence="1">
    <location>
        <begin position="649"/>
        <end position="702"/>
    </location>
</feature>
<feature type="glycosylation site" description="N-linked (GlcNAc...) asparagine" evidence="1">
    <location>
        <position position="379"/>
    </location>
</feature>
<feature type="mutagenesis site" description="Limited Na(+)/H(+) exchange activity, low amplitude pH oscillations and reduced strength in pBoc." evidence="6">
    <original>E</original>
    <variation>Q</variation>
    <location>
        <position position="271"/>
    </location>
</feature>
<feature type="mutagenesis site" description="In sa300; complete loss of posterior body wall contraction (pBoc)." evidence="4 5">
    <original>G</original>
    <variation>R</variation>
    <location>
        <position position="318"/>
    </location>
</feature>
<feature type="mutagenesis site" description="Reduced pBoc strength, low amplitude pH oscillations, and suppressed ability to rescue pBoc defect in the null mutant. Accumulates in intracellular space." evidence="6">
    <original>MVQHL</original>
    <variation>RRQHR</variation>
    <location>
        <begin position="541"/>
        <end position="545"/>
    </location>
</feature>
<feature type="mutagenesis site" description="Reduced Na(+)/H(+) exchange activity but complete rescue of pBoc defect in the null mutant." evidence="6">
    <original>KK</original>
    <variation>AA</variation>
    <location>
        <begin position="569"/>
        <end position="570"/>
    </location>
</feature>
<feature type="mutagenesis site" description="Increased Na(+)/H(+) exchange activity and strong extended pBoc. Complete rescue of pBoc defect in the null mutant." evidence="6">
    <original>T</original>
    <variation>A</variation>
    <location>
        <position position="618"/>
    </location>
</feature>
<sequence>MWIKLLFFFTTLLVSTSGLGDDGITALLDPNSTEFSTVLPSNNSEKFSYMLASVKNMNMTASEFEEFIKVLKHRQSKDHSGEHVGNEHDESHGISVVSWHWDYVKNELVLTLFFIVIGLFKLVYHHTFVTRKILPESCCLIFIGIAIGFFFVGDATHASIKFLEFKSKVFFFYLLPPIILESAYSLKDRAFIENIGTILLYAVVGTILNIVLLAAALLILIWVGIMGKYNLSVMDILTFASLVAAVDPVAVLAVFQEVGVNKMLYFMVFGESLFNDAVTIVCYNLAIEFQTLPDFTWYHGFLGLLSFLCVSIGGLIIGLICGAISSFVTKFTTDVRVVEPVVLFGMAYLAYLGSEMFHFSGIIALIACGLFQTHYACCNISYKSFTSVMYITKVCSTLCESLIFIILGVMLVNEREWFWTDWHPVFSAVSVVLCVVVRFGVTFFLTYFVNQFTGGVRHISFQEQFIMSYGGLRGAVSFSLVFMISANPDVKNTMLGATYAVILFTNIIQGSTIKLFVKWLNIRLAKKEDHFRLFIEFNNGMVQHLSQGIEDLCGDKSLSLINRMSELSKKYVRPLLEKNYTANKAKKEGKLVELNRAVAMREALNNSPSQSSFQRQHTIDEMAESGALPHDLLDEEHQGHHHHGQVHPDNEDADQRANELIKDVSSIRQLMHNPFEDCYLDRNLTHEEEKEQARLKMKKTRAFKFSSVRKTIGFFGKKKSVRRHATQQGILHSAIATIGVQSVDRPSTSTRVSVEDEEQGLTMKEMEEEHPLMTITESEETSF</sequence>
<comment type="function">
    <text evidence="4 5 6 7">Na+/H+ exchanger which mediates the transient acidification of the coelomic space and plays a role in contraction of posterior body muscles during defecation (PubMed:18191228, PubMed:18291648, PubMed:23319594). Probably by regulating the defecation motor program, required for fatty acid uptake by intestinal cells (PubMed:25849533).</text>
</comment>
<comment type="subunit">
    <text evidence="6">Interacts (via C-terminus) with cmd-1.</text>
</comment>
<comment type="subcellular location">
    <subcellularLocation>
        <location evidence="3 4 6">Basolateral cell membrane</location>
        <topology evidence="3 4 6">Multi-pass membrane protein</topology>
    </subcellularLocation>
</comment>
<comment type="tissue specificity">
    <text evidence="3 4">Detected in the posterior cells of the intestine.</text>
</comment>
<comment type="disruption phenotype">
    <text evidence="4 5 6">Loss of posterior body wall muscle contractions (pBoc), weak movement of tail, weak enteric muscle contractions, severe reduction in acidification of the pseudocoelom and slight constipation. Normal oscillatory Ca(2+) signaling in the intestine with unaffected defecation period and timing and normal locomotion.</text>
</comment>
<comment type="similarity">
    <text evidence="1">Belongs to the monovalent cation:proton antiporter 1 (CPA1) transporter (TC 2.A.36) family.</text>
</comment>
<gene>
    <name evidence="12 13" type="primary">pbo-4</name>
    <name evidence="11" type="synonym">nhx-7</name>
    <name type="ORF">K09C8.1</name>
</gene>
<name>PBO4_CAEEL</name>
<keyword id="KW-0050">Antiport</keyword>
<keyword id="KW-0112">Calmodulin-binding</keyword>
<keyword id="KW-1003">Cell membrane</keyword>
<keyword id="KW-0175">Coiled coil</keyword>
<keyword id="KW-0325">Glycoprotein</keyword>
<keyword id="KW-0406">Ion transport</keyword>
<keyword id="KW-0472">Membrane</keyword>
<keyword id="KW-1185">Reference proteome</keyword>
<keyword id="KW-0915">Sodium</keyword>
<keyword id="KW-0739">Sodium transport</keyword>
<keyword id="KW-0812">Transmembrane</keyword>
<keyword id="KW-1133">Transmembrane helix</keyword>
<keyword id="KW-0813">Transport</keyword>
<protein>
    <recommendedName>
        <fullName evidence="9">Na(+)/H(+) exchanger protein 7</fullName>
    </recommendedName>
    <alternativeName>
        <fullName evidence="8">Na(+)/H(+) antiporter nhx-7</fullName>
    </alternativeName>
    <alternativeName>
        <fullName evidence="9">PBoc defective protein pbo-4</fullName>
    </alternativeName>
</protein>
<accession>G5EBK1</accession>
<dbReference type="EMBL" id="AF497831">
    <property type="protein sequence ID" value="AAM18109.1"/>
    <property type="molecule type" value="mRNA"/>
</dbReference>
<dbReference type="EMBL" id="Z68006">
    <property type="protein sequence ID" value="CAA91995.2"/>
    <property type="molecule type" value="Genomic_DNA"/>
</dbReference>
<dbReference type="PIR" id="T23539">
    <property type="entry name" value="T23539"/>
</dbReference>
<dbReference type="RefSeq" id="NP_509830.2">
    <property type="nucleotide sequence ID" value="NM_077429.5"/>
</dbReference>
<dbReference type="SMR" id="G5EBK1"/>
<dbReference type="FunCoup" id="G5EBK1">
    <property type="interactions" value="307"/>
</dbReference>
<dbReference type="STRING" id="6239.K09C8.1.1"/>
<dbReference type="GlyCosmos" id="G5EBK1">
    <property type="glycosylation" value="1 site, No reported glycans"/>
</dbReference>
<dbReference type="PaxDb" id="6239-K09C8.1"/>
<dbReference type="PeptideAtlas" id="G5EBK1"/>
<dbReference type="EnsemblMetazoa" id="K09C8.1.1">
    <property type="protein sequence ID" value="K09C8.1.1"/>
    <property type="gene ID" value="WBGene00003943"/>
</dbReference>
<dbReference type="GeneID" id="181285"/>
<dbReference type="KEGG" id="cel:CELE_K09C8.1"/>
<dbReference type="AGR" id="WB:WBGene00003943"/>
<dbReference type="CTD" id="181285"/>
<dbReference type="WormBase" id="K09C8.1">
    <property type="protein sequence ID" value="CE31034"/>
    <property type="gene ID" value="WBGene00003943"/>
    <property type="gene designation" value="pbo-4"/>
</dbReference>
<dbReference type="eggNOG" id="KOG1966">
    <property type="taxonomic scope" value="Eukaryota"/>
</dbReference>
<dbReference type="HOGENOM" id="CLU_005912_4_3_1"/>
<dbReference type="InParanoid" id="G5EBK1"/>
<dbReference type="OMA" id="LVNEREW"/>
<dbReference type="OrthoDB" id="196264at2759"/>
<dbReference type="PhylomeDB" id="G5EBK1"/>
<dbReference type="Reactome" id="R-CEL-2160916">
    <property type="pathway name" value="Hyaluronan uptake and degradation"/>
</dbReference>
<dbReference type="Reactome" id="R-CEL-425986">
    <property type="pathway name" value="Sodium/Proton exchangers"/>
</dbReference>
<dbReference type="PRO" id="PR:G5EBK1"/>
<dbReference type="Proteomes" id="UP000001940">
    <property type="component" value="Chromosome X"/>
</dbReference>
<dbReference type="Bgee" id="WBGene00003943">
    <property type="expression patterns" value="Expressed in larva and 2 other cell types or tissues"/>
</dbReference>
<dbReference type="GO" id="GO:0016323">
    <property type="term" value="C:basolateral plasma membrane"/>
    <property type="evidence" value="ECO:0000314"/>
    <property type="project" value="WormBase"/>
</dbReference>
<dbReference type="GO" id="GO:0005886">
    <property type="term" value="C:plasma membrane"/>
    <property type="evidence" value="ECO:0000318"/>
    <property type="project" value="GO_Central"/>
</dbReference>
<dbReference type="GO" id="GO:0005516">
    <property type="term" value="F:calmodulin binding"/>
    <property type="evidence" value="ECO:0007669"/>
    <property type="project" value="UniProtKB-KW"/>
</dbReference>
<dbReference type="GO" id="GO:0015386">
    <property type="term" value="F:potassium:proton antiporter activity"/>
    <property type="evidence" value="ECO:0000318"/>
    <property type="project" value="GO_Central"/>
</dbReference>
<dbReference type="GO" id="GO:0015385">
    <property type="term" value="F:sodium:proton antiporter activity"/>
    <property type="evidence" value="ECO:0000318"/>
    <property type="project" value="GO_Central"/>
</dbReference>
<dbReference type="GO" id="GO:0030421">
    <property type="term" value="P:defecation"/>
    <property type="evidence" value="ECO:0000315"/>
    <property type="project" value="WormBase"/>
</dbReference>
<dbReference type="GO" id="GO:0010877">
    <property type="term" value="P:lipid transport involved in lipid storage"/>
    <property type="evidence" value="ECO:0000315"/>
    <property type="project" value="UniProtKB"/>
</dbReference>
<dbReference type="GO" id="GO:1904731">
    <property type="term" value="P:positive regulation of intestinal lipid absorption"/>
    <property type="evidence" value="ECO:0000315"/>
    <property type="project" value="UniProtKB"/>
</dbReference>
<dbReference type="GO" id="GO:0045989">
    <property type="term" value="P:positive regulation of striated muscle contraction"/>
    <property type="evidence" value="ECO:0000315"/>
    <property type="project" value="WormBase"/>
</dbReference>
<dbReference type="GO" id="GO:0071805">
    <property type="term" value="P:potassium ion transmembrane transport"/>
    <property type="evidence" value="ECO:0000318"/>
    <property type="project" value="GO_Central"/>
</dbReference>
<dbReference type="GO" id="GO:0030641">
    <property type="term" value="P:regulation of cellular pH"/>
    <property type="evidence" value="ECO:0000315"/>
    <property type="project" value="WormBase"/>
</dbReference>
<dbReference type="GO" id="GO:0051453">
    <property type="term" value="P:regulation of intracellular pH"/>
    <property type="evidence" value="ECO:0000318"/>
    <property type="project" value="GO_Central"/>
</dbReference>
<dbReference type="GO" id="GO:0098719">
    <property type="term" value="P:sodium ion import across plasma membrane"/>
    <property type="evidence" value="ECO:0000318"/>
    <property type="project" value="GO_Central"/>
</dbReference>
<dbReference type="Gene3D" id="6.10.140.1330">
    <property type="match status" value="1"/>
</dbReference>
<dbReference type="InterPro" id="IPR018422">
    <property type="entry name" value="Cation/H_exchanger_CPA1"/>
</dbReference>
<dbReference type="InterPro" id="IPR006153">
    <property type="entry name" value="Cation/H_exchanger_TM"/>
</dbReference>
<dbReference type="InterPro" id="IPR004709">
    <property type="entry name" value="NaH_exchanger"/>
</dbReference>
<dbReference type="NCBIfam" id="TIGR00840">
    <property type="entry name" value="b_cpa1"/>
    <property type="match status" value="1"/>
</dbReference>
<dbReference type="PANTHER" id="PTHR10110:SF126">
    <property type="entry name" value="NA(+)_H(+) EXCHANGER PROTEIN 7"/>
    <property type="match status" value="1"/>
</dbReference>
<dbReference type="PANTHER" id="PTHR10110">
    <property type="entry name" value="SODIUM/HYDROGEN EXCHANGER"/>
    <property type="match status" value="1"/>
</dbReference>
<dbReference type="Pfam" id="PF00999">
    <property type="entry name" value="Na_H_Exchanger"/>
    <property type="match status" value="1"/>
</dbReference>
<dbReference type="PRINTS" id="PR01084">
    <property type="entry name" value="NAHEXCHNGR"/>
</dbReference>
<organism>
    <name type="scientific">Caenorhabditis elegans</name>
    <dbReference type="NCBI Taxonomy" id="6239"/>
    <lineage>
        <taxon>Eukaryota</taxon>
        <taxon>Metazoa</taxon>
        <taxon>Ecdysozoa</taxon>
        <taxon>Nematoda</taxon>
        <taxon>Chromadorea</taxon>
        <taxon>Rhabditida</taxon>
        <taxon>Rhabditina</taxon>
        <taxon>Rhabditomorpha</taxon>
        <taxon>Rhabditoidea</taxon>
        <taxon>Rhabditidae</taxon>
        <taxon>Peloderinae</taxon>
        <taxon>Caenorhabditis</taxon>
    </lineage>
</organism>